<proteinExistence type="inferred from homology"/>
<reference key="1">
    <citation type="journal article" date="2000" name="Mol. Gen. Genet.">
        <title>Complete nucleotide sequence of the Oenothera elata plastid chromosome, representing plastome I of the five distinguishable Euoenothera plastomes.</title>
        <authorList>
            <person name="Hupfer H."/>
            <person name="Swiatek M."/>
            <person name="Hornung S."/>
            <person name="Herrmann R.G."/>
            <person name="Maier R.M."/>
            <person name="Chiu W.-L."/>
            <person name="Sears B."/>
        </authorList>
    </citation>
    <scope>NUCLEOTIDE SEQUENCE [LARGE SCALE GENOMIC DNA]</scope>
    <source>
        <strain>cv. Johansen</strain>
    </source>
</reference>
<reference key="2">
    <citation type="journal article" date="2008" name="Nucleic Acids Res.">
        <title>The complete nucleotide sequences of the five genetically distinct plastid genomes of Oenothera, subsection Oenothera: I. Sequence evaluation and plastome evolution.</title>
        <authorList>
            <person name="Greiner S."/>
            <person name="Wang X."/>
            <person name="Rauwolf U."/>
            <person name="Silber M.V."/>
            <person name="Mayer K."/>
            <person name="Meurer J."/>
            <person name="Haberer G."/>
            <person name="Herrmann R.G."/>
        </authorList>
    </citation>
    <scope>SEQUENCE REVISION TO 364 AND 495</scope>
</reference>
<organism>
    <name type="scientific">Oenothera elata subsp. hookeri</name>
    <name type="common">Hooker's evening primrose</name>
    <name type="synonym">Oenothera hookeri</name>
    <dbReference type="NCBI Taxonomy" id="85636"/>
    <lineage>
        <taxon>Eukaryota</taxon>
        <taxon>Viridiplantae</taxon>
        <taxon>Streptophyta</taxon>
        <taxon>Embryophyta</taxon>
        <taxon>Tracheophyta</taxon>
        <taxon>Spermatophyta</taxon>
        <taxon>Magnoliopsida</taxon>
        <taxon>eudicotyledons</taxon>
        <taxon>Gunneridae</taxon>
        <taxon>Pentapetalae</taxon>
        <taxon>rosids</taxon>
        <taxon>malvids</taxon>
        <taxon>Myrtales</taxon>
        <taxon>Onagraceae</taxon>
        <taxon>Onagroideae</taxon>
        <taxon>Onagreae</taxon>
        <taxon>Oenothera</taxon>
    </lineage>
</organism>
<feature type="chain" id="PRO_0000144384" description="ATP synthase subunit alpha, chloroplastic">
    <location>
        <begin position="1"/>
        <end position="505"/>
    </location>
</feature>
<feature type="binding site" evidence="1">
    <location>
        <begin position="170"/>
        <end position="177"/>
    </location>
    <ligand>
        <name>ATP</name>
        <dbReference type="ChEBI" id="CHEBI:30616"/>
    </ligand>
</feature>
<feature type="site" description="Required for activity" evidence="1">
    <location>
        <position position="363"/>
    </location>
</feature>
<keyword id="KW-0066">ATP synthesis</keyword>
<keyword id="KW-0067">ATP-binding</keyword>
<keyword id="KW-0139">CF(1)</keyword>
<keyword id="KW-0150">Chloroplast</keyword>
<keyword id="KW-0375">Hydrogen ion transport</keyword>
<keyword id="KW-0406">Ion transport</keyword>
<keyword id="KW-0472">Membrane</keyword>
<keyword id="KW-0547">Nucleotide-binding</keyword>
<keyword id="KW-0934">Plastid</keyword>
<keyword id="KW-0793">Thylakoid</keyword>
<keyword id="KW-1278">Translocase</keyword>
<keyword id="KW-0813">Transport</keyword>
<protein>
    <recommendedName>
        <fullName evidence="1">ATP synthase subunit alpha, chloroplastic</fullName>
        <ecNumber evidence="1">7.1.2.2</ecNumber>
    </recommendedName>
    <alternativeName>
        <fullName evidence="1">ATP synthase F1 sector subunit alpha</fullName>
    </alternativeName>
    <alternativeName>
        <fullName evidence="1">F-ATPase subunit alpha</fullName>
    </alternativeName>
</protein>
<dbReference type="EC" id="7.1.2.2" evidence="1"/>
<dbReference type="EMBL" id="AJ271079">
    <property type="protein sequence ID" value="CAB67160.2"/>
    <property type="molecule type" value="Genomic_DNA"/>
</dbReference>
<dbReference type="RefSeq" id="NP_084695.2">
    <property type="nucleotide sequence ID" value="NC_002693.2"/>
</dbReference>
<dbReference type="SMR" id="Q9MTL7"/>
<dbReference type="GeneID" id="802760"/>
<dbReference type="GO" id="GO:0009535">
    <property type="term" value="C:chloroplast thylakoid membrane"/>
    <property type="evidence" value="ECO:0007669"/>
    <property type="project" value="UniProtKB-SubCell"/>
</dbReference>
<dbReference type="GO" id="GO:0045259">
    <property type="term" value="C:proton-transporting ATP synthase complex"/>
    <property type="evidence" value="ECO:0007669"/>
    <property type="project" value="UniProtKB-KW"/>
</dbReference>
<dbReference type="GO" id="GO:0043531">
    <property type="term" value="F:ADP binding"/>
    <property type="evidence" value="ECO:0007669"/>
    <property type="project" value="TreeGrafter"/>
</dbReference>
<dbReference type="GO" id="GO:0005524">
    <property type="term" value="F:ATP binding"/>
    <property type="evidence" value="ECO:0007669"/>
    <property type="project" value="UniProtKB-UniRule"/>
</dbReference>
<dbReference type="GO" id="GO:0046933">
    <property type="term" value="F:proton-transporting ATP synthase activity, rotational mechanism"/>
    <property type="evidence" value="ECO:0007669"/>
    <property type="project" value="UniProtKB-UniRule"/>
</dbReference>
<dbReference type="CDD" id="cd18113">
    <property type="entry name" value="ATP-synt_F1_alpha_C"/>
    <property type="match status" value="1"/>
</dbReference>
<dbReference type="CDD" id="cd18116">
    <property type="entry name" value="ATP-synt_F1_alpha_N"/>
    <property type="match status" value="1"/>
</dbReference>
<dbReference type="CDD" id="cd01132">
    <property type="entry name" value="F1-ATPase_alpha_CD"/>
    <property type="match status" value="1"/>
</dbReference>
<dbReference type="FunFam" id="1.20.150.20:FF:000001">
    <property type="entry name" value="ATP synthase subunit alpha"/>
    <property type="match status" value="1"/>
</dbReference>
<dbReference type="FunFam" id="2.40.30.20:FF:000001">
    <property type="entry name" value="ATP synthase subunit alpha"/>
    <property type="match status" value="1"/>
</dbReference>
<dbReference type="FunFam" id="3.40.50.300:FF:000002">
    <property type="entry name" value="ATP synthase subunit alpha"/>
    <property type="match status" value="1"/>
</dbReference>
<dbReference type="Gene3D" id="2.40.30.20">
    <property type="match status" value="1"/>
</dbReference>
<dbReference type="Gene3D" id="1.20.150.20">
    <property type="entry name" value="ATP synthase alpha/beta chain, C-terminal domain"/>
    <property type="match status" value="1"/>
</dbReference>
<dbReference type="Gene3D" id="3.40.50.300">
    <property type="entry name" value="P-loop containing nucleotide triphosphate hydrolases"/>
    <property type="match status" value="1"/>
</dbReference>
<dbReference type="HAMAP" id="MF_01346">
    <property type="entry name" value="ATP_synth_alpha_bact"/>
    <property type="match status" value="1"/>
</dbReference>
<dbReference type="InterPro" id="IPR023366">
    <property type="entry name" value="ATP_synth_asu-like_sf"/>
</dbReference>
<dbReference type="InterPro" id="IPR000793">
    <property type="entry name" value="ATP_synth_asu_C"/>
</dbReference>
<dbReference type="InterPro" id="IPR038376">
    <property type="entry name" value="ATP_synth_asu_C_sf"/>
</dbReference>
<dbReference type="InterPro" id="IPR033732">
    <property type="entry name" value="ATP_synth_F1_a_nt-bd_dom"/>
</dbReference>
<dbReference type="InterPro" id="IPR005294">
    <property type="entry name" value="ATP_synth_F1_asu"/>
</dbReference>
<dbReference type="InterPro" id="IPR020003">
    <property type="entry name" value="ATPase_a/bsu_AS"/>
</dbReference>
<dbReference type="InterPro" id="IPR004100">
    <property type="entry name" value="ATPase_F1/V1/A1_a/bsu_N"/>
</dbReference>
<dbReference type="InterPro" id="IPR036121">
    <property type="entry name" value="ATPase_F1/V1/A1_a/bsu_N_sf"/>
</dbReference>
<dbReference type="InterPro" id="IPR000194">
    <property type="entry name" value="ATPase_F1/V1/A1_a/bsu_nucl-bd"/>
</dbReference>
<dbReference type="InterPro" id="IPR027417">
    <property type="entry name" value="P-loop_NTPase"/>
</dbReference>
<dbReference type="NCBIfam" id="TIGR00962">
    <property type="entry name" value="atpA"/>
    <property type="match status" value="1"/>
</dbReference>
<dbReference type="NCBIfam" id="NF009884">
    <property type="entry name" value="PRK13343.1"/>
    <property type="match status" value="1"/>
</dbReference>
<dbReference type="PANTHER" id="PTHR48082">
    <property type="entry name" value="ATP SYNTHASE SUBUNIT ALPHA, MITOCHONDRIAL"/>
    <property type="match status" value="1"/>
</dbReference>
<dbReference type="PANTHER" id="PTHR48082:SF2">
    <property type="entry name" value="ATP SYNTHASE SUBUNIT ALPHA, MITOCHONDRIAL"/>
    <property type="match status" value="1"/>
</dbReference>
<dbReference type="Pfam" id="PF00006">
    <property type="entry name" value="ATP-synt_ab"/>
    <property type="match status" value="1"/>
</dbReference>
<dbReference type="Pfam" id="PF00306">
    <property type="entry name" value="ATP-synt_ab_C"/>
    <property type="match status" value="1"/>
</dbReference>
<dbReference type="Pfam" id="PF02874">
    <property type="entry name" value="ATP-synt_ab_N"/>
    <property type="match status" value="1"/>
</dbReference>
<dbReference type="PIRSF" id="PIRSF039088">
    <property type="entry name" value="F_ATPase_subunit_alpha"/>
    <property type="match status" value="1"/>
</dbReference>
<dbReference type="SUPFAM" id="SSF47917">
    <property type="entry name" value="C-terminal domain of alpha and beta subunits of F1 ATP synthase"/>
    <property type="match status" value="1"/>
</dbReference>
<dbReference type="SUPFAM" id="SSF50615">
    <property type="entry name" value="N-terminal domain of alpha and beta subunits of F1 ATP synthase"/>
    <property type="match status" value="1"/>
</dbReference>
<dbReference type="SUPFAM" id="SSF52540">
    <property type="entry name" value="P-loop containing nucleoside triphosphate hydrolases"/>
    <property type="match status" value="1"/>
</dbReference>
<dbReference type="PROSITE" id="PS00152">
    <property type="entry name" value="ATPASE_ALPHA_BETA"/>
    <property type="match status" value="1"/>
</dbReference>
<accession>Q9MTL7</accession>
<name>ATPA_OENEH</name>
<comment type="function">
    <text>Produces ATP from ADP in the presence of a proton gradient across the membrane. The alpha chain is a regulatory subunit.</text>
</comment>
<comment type="catalytic activity">
    <reaction evidence="1">
        <text>ATP + H2O + 4 H(+)(in) = ADP + phosphate + 5 H(+)(out)</text>
        <dbReference type="Rhea" id="RHEA:57720"/>
        <dbReference type="ChEBI" id="CHEBI:15377"/>
        <dbReference type="ChEBI" id="CHEBI:15378"/>
        <dbReference type="ChEBI" id="CHEBI:30616"/>
        <dbReference type="ChEBI" id="CHEBI:43474"/>
        <dbReference type="ChEBI" id="CHEBI:456216"/>
        <dbReference type="EC" id="7.1.2.2"/>
    </reaction>
</comment>
<comment type="subunit">
    <text evidence="1">F-type ATPases have 2 components, CF(1) - the catalytic core - and CF(0) - the membrane proton channel. CF(1) has five subunits: alpha(3), beta(3), gamma(1), delta(1), epsilon(1). CF(0) has four main subunits: a, b, b' and c.</text>
</comment>
<comment type="subcellular location">
    <subcellularLocation>
        <location evidence="1">Plastid</location>
        <location evidence="1">Chloroplast thylakoid membrane</location>
        <topology evidence="1">Peripheral membrane protein</topology>
    </subcellularLocation>
</comment>
<comment type="similarity">
    <text evidence="1">Belongs to the ATPase alpha/beta chains family.</text>
</comment>
<gene>
    <name evidence="1" type="primary">atpA</name>
</gene>
<evidence type="ECO:0000255" key="1">
    <source>
        <dbReference type="HAMAP-Rule" id="MF_01346"/>
    </source>
</evidence>
<geneLocation type="chloroplast"/>
<sequence length="505" mass="55246">MATIRADEISNIIRERIEQYNREVKIVNTGTVLQVGDGIARIYGLDEVMAGELVEFEEGTIGIALNLESKNVGVVLMGDGLLIQEGSSVKATGRIAQIPVSEAYLGRVINALAKPIDGRGEISSSESRLIESPAPGIISRRSVYEPLQTGLIAIDAMIPIGRGQRELIIGDRQTGKTAVATDTILNQQGNNVICVYVAIGQKASSVAQVVNALQERGAMEYTIVVAEAADSPATLQYLAPYTGAALAEYFMYRERHTLIIYDDPSKQAQAYRQMSLLLRRPPGREAYPGDVFYLHSRLLERAAKLSSRLGEGSMTALPIVETQSGDVSAYIPTNVISITDGQIFLSADLFNAGIRPAINVGISVSRVGSAAQIKAMKQVAGKLKLELAQFAELEAFAQFSSDLDKATQNQLARGQRLRELLKQSQAKPLTVAEQILTIYTGTNGYLDSFEIAQVRKFLDELRDYVKTRKPQFEEIISSTKIFTEEAQALLKDAIQEQKELFLVQE</sequence>